<feature type="chain" id="PRO_0000126549" description="Small ribosomal subunit protein uS8">
    <location>
        <begin position="1"/>
        <end position="130"/>
    </location>
</feature>
<keyword id="KW-0002">3D-structure</keyword>
<keyword id="KW-1185">Reference proteome</keyword>
<keyword id="KW-0687">Ribonucleoprotein</keyword>
<keyword id="KW-0689">Ribosomal protein</keyword>
<keyword id="KW-0694">RNA-binding</keyword>
<keyword id="KW-0699">rRNA-binding</keyword>
<gene>
    <name evidence="1" type="primary">rps8</name>
    <name type="ordered locus">PF1809</name>
</gene>
<accession>Q8U014</accession>
<comment type="function">
    <text evidence="1">One of the primary rRNA binding proteins, it binds directly to 16S rRNA central domain where it helps coordinate assembly of the platform of the 30S subunit.</text>
</comment>
<comment type="subunit">
    <text evidence="1 2">Part of the 30S ribosomal subunit.</text>
</comment>
<comment type="similarity">
    <text evidence="1">Belongs to the universal ribosomal protein uS8 family.</text>
</comment>
<reference key="1">
    <citation type="journal article" date="1999" name="Genetics">
        <title>Divergence of the hyperthermophilic archaea Pyrococcus furiosus and P. horikoshii inferred from complete genomic sequences.</title>
        <authorList>
            <person name="Maeder D.L."/>
            <person name="Weiss R.B."/>
            <person name="Dunn D.M."/>
            <person name="Cherry J.L."/>
            <person name="Gonzalez J.M."/>
            <person name="DiRuggiero J."/>
            <person name="Robb F.T."/>
        </authorList>
    </citation>
    <scope>NUCLEOTIDE SEQUENCE [LARGE SCALE GENOMIC DNA]</scope>
    <source>
        <strain>ATCC 43587 / DSM 3638 / JCM 8422 / Vc1</strain>
    </source>
</reference>
<reference evidence="3" key="2">
    <citation type="journal article" date="2013" name="Nucleic Acids Res.">
        <title>Promiscuous behaviour of archaeal ribosomal proteins: implications for eukaryotic ribosome evolution.</title>
        <authorList>
            <person name="Armache J.P."/>
            <person name="Anger A.M."/>
            <person name="Marquez V."/>
            <person name="Franckenberg S."/>
            <person name="Frohlich T."/>
            <person name="Villa E."/>
            <person name="Berninghausen O."/>
            <person name="Thomm M."/>
            <person name="Arnold G.J."/>
            <person name="Beckmann R."/>
            <person name="Wilson D.N."/>
        </authorList>
    </citation>
    <scope>STRUCTURE BY ELECTRON MICROSCOPY (6.60 ANGSTROMS) IN THE 70S RIBOSOME</scope>
    <scope>SUBUNIT</scope>
</reference>
<evidence type="ECO:0000255" key="1">
    <source>
        <dbReference type="HAMAP-Rule" id="MF_01302"/>
    </source>
</evidence>
<evidence type="ECO:0000269" key="2">
    <source>
    </source>
</evidence>
<evidence type="ECO:0007744" key="3">
    <source>
        <dbReference type="PDB" id="4V6U"/>
    </source>
</evidence>
<dbReference type="EMBL" id="AE009950">
    <property type="protein sequence ID" value="AAL81933.1"/>
    <property type="molecule type" value="Genomic_DNA"/>
</dbReference>
<dbReference type="RefSeq" id="WP_011012950.1">
    <property type="nucleotide sequence ID" value="NZ_CP023154.1"/>
</dbReference>
<dbReference type="PDB" id="4V6U">
    <property type="method" value="EM"/>
    <property type="resolution" value="6.60 A"/>
    <property type="chains" value="AI=1-130"/>
</dbReference>
<dbReference type="PDB" id="5JB3">
    <property type="method" value="EM"/>
    <property type="resolution" value="5.34 A"/>
    <property type="chains" value="I=1-130"/>
</dbReference>
<dbReference type="PDB" id="5JBH">
    <property type="method" value="EM"/>
    <property type="resolution" value="5.34 A"/>
    <property type="chains" value="I=1-130"/>
</dbReference>
<dbReference type="PDBsum" id="4V6U"/>
<dbReference type="PDBsum" id="5JB3"/>
<dbReference type="PDBsum" id="5JBH"/>
<dbReference type="EMDB" id="EMD-50611"/>
<dbReference type="EMDB" id="EMD-50612"/>
<dbReference type="EMDB" id="EMD-50613"/>
<dbReference type="EMDB" id="EMD-8149"/>
<dbReference type="SMR" id="Q8U014"/>
<dbReference type="STRING" id="186497.PF1809"/>
<dbReference type="PaxDb" id="186497-PF1809"/>
<dbReference type="KEGG" id="pfu:PF1809"/>
<dbReference type="PATRIC" id="fig|186497.12.peg.1880"/>
<dbReference type="eggNOG" id="arCOG04091">
    <property type="taxonomic scope" value="Archaea"/>
</dbReference>
<dbReference type="HOGENOM" id="CLU_098428_1_1_2"/>
<dbReference type="OrthoDB" id="5670at2157"/>
<dbReference type="PhylomeDB" id="Q8U014"/>
<dbReference type="Proteomes" id="UP000001013">
    <property type="component" value="Chromosome"/>
</dbReference>
<dbReference type="GO" id="GO:1990904">
    <property type="term" value="C:ribonucleoprotein complex"/>
    <property type="evidence" value="ECO:0007669"/>
    <property type="project" value="UniProtKB-KW"/>
</dbReference>
<dbReference type="GO" id="GO:0005840">
    <property type="term" value="C:ribosome"/>
    <property type="evidence" value="ECO:0007669"/>
    <property type="project" value="UniProtKB-KW"/>
</dbReference>
<dbReference type="GO" id="GO:0019843">
    <property type="term" value="F:rRNA binding"/>
    <property type="evidence" value="ECO:0007669"/>
    <property type="project" value="UniProtKB-UniRule"/>
</dbReference>
<dbReference type="GO" id="GO:0003735">
    <property type="term" value="F:structural constituent of ribosome"/>
    <property type="evidence" value="ECO:0007669"/>
    <property type="project" value="InterPro"/>
</dbReference>
<dbReference type="GO" id="GO:0006412">
    <property type="term" value="P:translation"/>
    <property type="evidence" value="ECO:0007669"/>
    <property type="project" value="UniProtKB-UniRule"/>
</dbReference>
<dbReference type="FunFam" id="3.30.1370.30:FF:000001">
    <property type="entry name" value="40S ribosomal protein S15a"/>
    <property type="match status" value="1"/>
</dbReference>
<dbReference type="FunFam" id="3.30.1490.10:FF:000002">
    <property type="entry name" value="40S ribosomal protein S15a"/>
    <property type="match status" value="1"/>
</dbReference>
<dbReference type="Gene3D" id="3.30.1370.30">
    <property type="match status" value="1"/>
</dbReference>
<dbReference type="Gene3D" id="3.30.1490.10">
    <property type="match status" value="1"/>
</dbReference>
<dbReference type="HAMAP" id="MF_01302_A">
    <property type="entry name" value="Ribosomal_uS8_A"/>
    <property type="match status" value="1"/>
</dbReference>
<dbReference type="InterPro" id="IPR000630">
    <property type="entry name" value="Ribosomal_uS8"/>
</dbReference>
<dbReference type="InterPro" id="IPR047863">
    <property type="entry name" value="Ribosomal_uS8_CS"/>
</dbReference>
<dbReference type="InterPro" id="IPR035987">
    <property type="entry name" value="Ribosomal_uS8_sf"/>
</dbReference>
<dbReference type="NCBIfam" id="NF003115">
    <property type="entry name" value="PRK04034.1"/>
    <property type="match status" value="1"/>
</dbReference>
<dbReference type="PANTHER" id="PTHR11758">
    <property type="entry name" value="40S RIBOSOMAL PROTEIN S15A"/>
    <property type="match status" value="1"/>
</dbReference>
<dbReference type="Pfam" id="PF00410">
    <property type="entry name" value="Ribosomal_S8"/>
    <property type="match status" value="1"/>
</dbReference>
<dbReference type="SUPFAM" id="SSF56047">
    <property type="entry name" value="Ribosomal protein S8"/>
    <property type="match status" value="1"/>
</dbReference>
<dbReference type="PROSITE" id="PS00053">
    <property type="entry name" value="RIBOSOMAL_S8"/>
    <property type="match status" value="1"/>
</dbReference>
<protein>
    <recommendedName>
        <fullName evidence="1">Small ribosomal subunit protein uS8</fullName>
    </recommendedName>
    <alternativeName>
        <fullName>30S ribosomal protein S8</fullName>
    </alternativeName>
</protein>
<proteinExistence type="evidence at protein level"/>
<organism>
    <name type="scientific">Pyrococcus furiosus (strain ATCC 43587 / DSM 3638 / JCM 8422 / Vc1)</name>
    <dbReference type="NCBI Taxonomy" id="186497"/>
    <lineage>
        <taxon>Archaea</taxon>
        <taxon>Methanobacteriati</taxon>
        <taxon>Methanobacteriota</taxon>
        <taxon>Thermococci</taxon>
        <taxon>Thermococcales</taxon>
        <taxon>Thermococcaceae</taxon>
        <taxon>Pyrococcus</taxon>
    </lineage>
</organism>
<sequence length="130" mass="14662">MTLLDPLANALSHITNSERVGKREVYIKPASKLIGEVLRVMQKYGYIGEFEFIDDGRAGVYRVQLLGRINKAGAIKPRFPVKVSEFEKWEKRFLPAFEFGILIVSTSQGVMSHKEAIEKGIGGRLIAYVY</sequence>
<name>RS8_PYRFU</name>